<dbReference type="EC" id="3.4.25.1" evidence="1"/>
<dbReference type="EMBL" id="AE009441">
    <property type="protein sequence ID" value="AAL65028.1"/>
    <property type="molecule type" value="Genomic_DNA"/>
</dbReference>
<dbReference type="RefSeq" id="WP_011009495.1">
    <property type="nucleotide sequence ID" value="NC_003364.1"/>
</dbReference>
<dbReference type="SMR" id="Q8ZST5"/>
<dbReference type="FunCoup" id="Q8ZST5">
    <property type="interactions" value="183"/>
</dbReference>
<dbReference type="STRING" id="178306.PAE3595"/>
<dbReference type="EnsemblBacteria" id="AAL65028">
    <property type="protein sequence ID" value="AAL65028"/>
    <property type="gene ID" value="PAE3595"/>
</dbReference>
<dbReference type="GeneID" id="1466162"/>
<dbReference type="KEGG" id="pai:PAE3595"/>
<dbReference type="PATRIC" id="fig|178306.9.peg.2708"/>
<dbReference type="eggNOG" id="arCOG00970">
    <property type="taxonomic scope" value="Archaea"/>
</dbReference>
<dbReference type="HOGENOM" id="CLU_035750_7_2_2"/>
<dbReference type="InParanoid" id="Q8ZST5"/>
<dbReference type="Proteomes" id="UP000002439">
    <property type="component" value="Chromosome"/>
</dbReference>
<dbReference type="GO" id="GO:0005829">
    <property type="term" value="C:cytosol"/>
    <property type="evidence" value="ECO:0000318"/>
    <property type="project" value="GO_Central"/>
</dbReference>
<dbReference type="GO" id="GO:0019774">
    <property type="term" value="C:proteasome core complex, beta-subunit complex"/>
    <property type="evidence" value="ECO:0000318"/>
    <property type="project" value="GO_Central"/>
</dbReference>
<dbReference type="GO" id="GO:0004175">
    <property type="term" value="F:endopeptidase activity"/>
    <property type="evidence" value="ECO:0000318"/>
    <property type="project" value="GO_Central"/>
</dbReference>
<dbReference type="GO" id="GO:0004298">
    <property type="term" value="F:threonine-type endopeptidase activity"/>
    <property type="evidence" value="ECO:0007669"/>
    <property type="project" value="UniProtKB-UniRule"/>
</dbReference>
<dbReference type="GO" id="GO:0043161">
    <property type="term" value="P:proteasome-mediated ubiquitin-dependent protein catabolic process"/>
    <property type="evidence" value="ECO:0000318"/>
    <property type="project" value="GO_Central"/>
</dbReference>
<dbReference type="CDD" id="cd03764">
    <property type="entry name" value="proteasome_beta_archeal"/>
    <property type="match status" value="1"/>
</dbReference>
<dbReference type="Gene3D" id="3.60.20.10">
    <property type="entry name" value="Glutamine Phosphoribosylpyrophosphate, subunit 1, domain 1"/>
    <property type="match status" value="1"/>
</dbReference>
<dbReference type="HAMAP" id="MF_02113_A">
    <property type="entry name" value="Proteasome_B_A"/>
    <property type="match status" value="1"/>
</dbReference>
<dbReference type="InterPro" id="IPR029055">
    <property type="entry name" value="Ntn_hydrolases_N"/>
</dbReference>
<dbReference type="InterPro" id="IPR019983">
    <property type="entry name" value="Pept_T1A_Psome_bsu_arc"/>
</dbReference>
<dbReference type="InterPro" id="IPR000243">
    <property type="entry name" value="Pept_T1A_subB"/>
</dbReference>
<dbReference type="InterPro" id="IPR016050">
    <property type="entry name" value="Proteasome_bsu_CS"/>
</dbReference>
<dbReference type="InterPro" id="IPR001353">
    <property type="entry name" value="Proteasome_sua/b"/>
</dbReference>
<dbReference type="InterPro" id="IPR023333">
    <property type="entry name" value="Proteasome_suB-type"/>
</dbReference>
<dbReference type="NCBIfam" id="TIGR03634">
    <property type="entry name" value="arc_protsome_B"/>
    <property type="match status" value="1"/>
</dbReference>
<dbReference type="PANTHER" id="PTHR32194:SF0">
    <property type="entry name" value="ATP-DEPENDENT PROTEASE SUBUNIT HSLV"/>
    <property type="match status" value="1"/>
</dbReference>
<dbReference type="PANTHER" id="PTHR32194">
    <property type="entry name" value="METALLOPROTEASE TLDD"/>
    <property type="match status" value="1"/>
</dbReference>
<dbReference type="Pfam" id="PF00227">
    <property type="entry name" value="Proteasome"/>
    <property type="match status" value="1"/>
</dbReference>
<dbReference type="PRINTS" id="PR00141">
    <property type="entry name" value="PROTEASOME"/>
</dbReference>
<dbReference type="SUPFAM" id="SSF56235">
    <property type="entry name" value="N-terminal nucleophile aminohydrolases (Ntn hydrolases)"/>
    <property type="match status" value="1"/>
</dbReference>
<dbReference type="PROSITE" id="PS00854">
    <property type="entry name" value="PROTEASOME_BETA_1"/>
    <property type="match status" value="1"/>
</dbReference>
<dbReference type="PROSITE" id="PS51476">
    <property type="entry name" value="PROTEASOME_BETA_2"/>
    <property type="match status" value="1"/>
</dbReference>
<organism>
    <name type="scientific">Pyrobaculum aerophilum (strain ATCC 51768 / DSM 7523 / JCM 9630 / CIP 104966 / NBRC 100827 / IM2)</name>
    <dbReference type="NCBI Taxonomy" id="178306"/>
    <lineage>
        <taxon>Archaea</taxon>
        <taxon>Thermoproteota</taxon>
        <taxon>Thermoprotei</taxon>
        <taxon>Thermoproteales</taxon>
        <taxon>Thermoproteaceae</taxon>
        <taxon>Pyrobaculum</taxon>
    </lineage>
</organism>
<evidence type="ECO:0000255" key="1">
    <source>
        <dbReference type="HAMAP-Rule" id="MF_02113"/>
    </source>
</evidence>
<reference key="1">
    <citation type="journal article" date="2002" name="Proc. Natl. Acad. Sci. U.S.A.">
        <title>Genome sequence of the hyperthermophilic crenarchaeon Pyrobaculum aerophilum.</title>
        <authorList>
            <person name="Fitz-Gibbon S.T."/>
            <person name="Ladner H."/>
            <person name="Kim U.-J."/>
            <person name="Stetter K.O."/>
            <person name="Simon M.I."/>
            <person name="Miller J.H."/>
        </authorList>
    </citation>
    <scope>NUCLEOTIDE SEQUENCE [LARGE SCALE GENOMIC DNA]</scope>
    <source>
        <strain>ATCC 51768 / DSM 7523 / JCM 9630 / CIP 104966 / NBRC 100827 / IM2</strain>
    </source>
</reference>
<name>PSB2_PYRAE</name>
<feature type="propeptide" id="PRO_0000397392" description="Removed in mature form; by autocatalysis" evidence="1">
    <location>
        <begin position="1"/>
        <end position="9"/>
    </location>
</feature>
<feature type="chain" id="PRO_0000397393" description="Proteasome subunit beta 2">
    <location>
        <begin position="10"/>
        <end position="203"/>
    </location>
</feature>
<feature type="active site" description="Nucleophile" evidence="1">
    <location>
        <position position="10"/>
    </location>
</feature>
<proteinExistence type="inferred from homology"/>
<comment type="function">
    <text evidence="1">Component of the proteasome core, a large protease complex with broad specificity involved in protein degradation.</text>
</comment>
<comment type="catalytic activity">
    <reaction evidence="1">
        <text>Cleavage of peptide bonds with very broad specificity.</text>
        <dbReference type="EC" id="3.4.25.1"/>
    </reaction>
</comment>
<comment type="activity regulation">
    <text evidence="1">The formation of the proteasomal ATPase PAN-20S proteasome complex, via the docking of the C-termini of PAN into the intersubunit pockets in the alpha-rings, triggers opening of the gate for substrate entry. Interconversion between the open-gate and close-gate conformations leads to a dynamic regulation of the 20S proteasome proteolysis activity.</text>
</comment>
<comment type="subunit">
    <text evidence="1">The 20S proteasome core is composed of 14 alpha and 14 beta subunits that assemble into four stacked heptameric rings, resulting in a barrel-shaped structure. The two inner rings, each composed of seven catalytic beta subunits, are sandwiched by two outer rings, each composed of seven alpha subunits. The catalytic chamber with the active sites is on the inside of the barrel. Has a gated structure, the ends of the cylinder being occluded by the N-termini of the alpha-subunits. Is capped at one or both ends by the proteasome regulatory ATPase, PAN.</text>
</comment>
<comment type="subcellular location">
    <subcellularLocation>
        <location evidence="1">Cytoplasm</location>
    </subcellularLocation>
</comment>
<comment type="similarity">
    <text evidence="1">Belongs to the peptidase T1B family.</text>
</comment>
<protein>
    <recommendedName>
        <fullName evidence="1">Proteasome subunit beta 2</fullName>
        <ecNumber evidence="1">3.4.25.1</ecNumber>
    </recommendedName>
    <alternativeName>
        <fullName evidence="1">20S proteasome beta subunit 2</fullName>
    </alternativeName>
    <alternativeName>
        <fullName evidence="1">Proteasome core protein PsmB 2</fullName>
    </alternativeName>
</protein>
<sequence>MGEEVQIGATAVGIKAKDGVVLAAEKRVSYGFYTLSSAGKKVFVIDDKLAIASAGIIADMQTLAKILKLNAKAYELEMKRKPSTHSMARLLSVIMFSRRFMPFFAEVLVGGIDEEGPHLIVMDPLGSLIEDNYAALGTGAKLAVAVLDTGYRPDITVEEAKKLAVQALKAAIERDPVSGGGIDLAIVDKNGAREEEVRVQLLI</sequence>
<accession>Q8ZST5</accession>
<gene>
    <name evidence="1" type="primary">psmB2</name>
    <name type="ordered locus">PAE3595</name>
</gene>
<keyword id="KW-0068">Autocatalytic cleavage</keyword>
<keyword id="KW-0963">Cytoplasm</keyword>
<keyword id="KW-0378">Hydrolase</keyword>
<keyword id="KW-0645">Protease</keyword>
<keyword id="KW-0647">Proteasome</keyword>
<keyword id="KW-1185">Reference proteome</keyword>
<keyword id="KW-0888">Threonine protease</keyword>
<keyword id="KW-0865">Zymogen</keyword>